<protein>
    <recommendedName>
        <fullName>Septin and tuftelin-interacting protein 1 homolog</fullName>
        <shortName>STIP-1</shortName>
    </recommendedName>
</protein>
<feature type="chain" id="PRO_0000342285" description="Septin and tuftelin-interacting protein 1 homolog">
    <location>
        <begin position="1"/>
        <end position="894"/>
    </location>
</feature>
<feature type="domain" description="G-patch" evidence="3">
    <location>
        <begin position="149"/>
        <end position="195"/>
    </location>
</feature>
<feature type="region of interest" description="Disordered" evidence="4">
    <location>
        <begin position="71"/>
        <end position="149"/>
    </location>
</feature>
<feature type="region of interest" description="Disordered" evidence="4">
    <location>
        <begin position="187"/>
        <end position="225"/>
    </location>
</feature>
<feature type="region of interest" description="Disordered" evidence="4">
    <location>
        <begin position="785"/>
        <end position="821"/>
    </location>
</feature>
<feature type="coiled-coil region" evidence="2">
    <location>
        <begin position="329"/>
        <end position="449"/>
    </location>
</feature>
<feature type="compositionally biased region" description="Basic and acidic residues" evidence="4">
    <location>
        <begin position="73"/>
        <end position="84"/>
    </location>
</feature>
<feature type="compositionally biased region" description="Basic residues" evidence="4">
    <location>
        <begin position="97"/>
        <end position="126"/>
    </location>
</feature>
<feature type="compositionally biased region" description="Acidic residues" evidence="4">
    <location>
        <begin position="202"/>
        <end position="217"/>
    </location>
</feature>
<name>TFP11_DICDI</name>
<gene>
    <name type="primary">stip-1</name>
    <name type="synonym">stip</name>
    <name type="ORF">DDB_G0272608</name>
</gene>
<gene>
    <name type="primary">stip-2</name>
    <name type="synonym">stip</name>
    <name type="ORF">DDB_G0274035</name>
</gene>
<sequence length="894" mass="103525">MNIEGDDEEFYNFNDIKKKRKFTKEDAIYGVFNDGWGDYEDEEESKMTEEEYYKMKKRYSTPVGFVASGIYEPNEHKLKNKDGENIDNDDDDGEEKKKKKKEKKEKKQKKKEKKEKKEKKNKKKNKYGGGGGNNYDDSDNDKSIEDKPVGGIGAALLSKMGYKGTGGLGRDGGGMVEPIKVQVRPKNAGLASVTELNVNSSDDSDDSDQSEGDTDSDNENKRSLGWKKKEPKLKYDFDEHLESTTTTTFKKKTTTTTATTTTSSTPQIVIDMRGPEARLYTGMEEIKHHKHHHHHQHNKEYQNITSILDDQSKPLSELKHNVDLLLKLKQIDIQNQDNKIKHENDKINNLTRGVEKLKLTIENDKEQIKKVTEILETITTVKKQLDQSQLDLKQLYKVFKKLKSNYPKEYQNFKLYNLQKELLEPLLKEKLNQWELESNSDNNDNSSLEISKKLSKEMVKWRQLFQESVSVLGEYQINVYFLIMRDLFLPKFKNYLRSQWDVKKPSNAATLISTWSDTLPDVIQEALLEQSILPKLKVAIEKWDPRTDPIPLDHWLLPWIPLLGSELESFYPLIRQKIISALQDWHPSDKSAIKILTPWKNIFQSNSMDSLLNRAIIPKLSKSIKDLEINPSNQKSPIEIQWLLRWSNLNNNDNNNNNNNNNNNDNNNNNNSITTTDNINLDSGLITLSTIICILEKDFFTRWLKILLEWLKSPDANLEEISNWYSGWKKQFPKEIISNDKIKSIFNISLNLMKKVLSNETIQKDDEILISQKINSLLNTNINNNNNNNNNINNSYQQQNQQQPIKPISSPSLNSSNNNNIDNISTKQMVEQLAIKNGLLFIPSEKKTNSGQQIYIFDKIPIIIERDLIMYNNNNNNRWEPANIQYLLDKSLNK</sequence>
<evidence type="ECO:0000250" key="1"/>
<evidence type="ECO:0000255" key="2"/>
<evidence type="ECO:0000255" key="3">
    <source>
        <dbReference type="PROSITE-ProRule" id="PRU00092"/>
    </source>
</evidence>
<evidence type="ECO:0000256" key="4">
    <source>
        <dbReference type="SAM" id="MobiDB-lite"/>
    </source>
</evidence>
<evidence type="ECO:0000305" key="5"/>
<keyword id="KW-0175">Coiled coil</keyword>
<keyword id="KW-0963">Cytoplasm</keyword>
<keyword id="KW-0507">mRNA processing</keyword>
<keyword id="KW-0508">mRNA splicing</keyword>
<keyword id="KW-0539">Nucleus</keyword>
<keyword id="KW-1185">Reference proteome</keyword>
<keyword id="KW-0747">Spliceosome</keyword>
<comment type="function">
    <text evidence="1">May be involved in pre-mRNA splicing.</text>
</comment>
<comment type="subunit">
    <text evidence="1">Identified in the spliceosome C complex.</text>
</comment>
<comment type="subcellular location">
    <subcellularLocation>
        <location evidence="1">Cytoplasm</location>
    </subcellularLocation>
    <subcellularLocation>
        <location evidence="1">Nucleus</location>
    </subcellularLocation>
</comment>
<comment type="similarity">
    <text evidence="5">Belongs to the TFP11/STIP family.</text>
</comment>
<comment type="caution">
    <text evidence="5">The gene for this protein is duplicated in strains AX3 and AX4. These strains contain a duplication of a segment of 750 kb of chromosome 2 compared to the corresponding sequence in strain AX2.</text>
</comment>
<dbReference type="EMBL" id="DQ342053">
    <property type="protein sequence ID" value="ABC69945.1"/>
    <property type="molecule type" value="mRNA"/>
</dbReference>
<dbReference type="EMBL" id="AAFI02000011">
    <property type="protein sequence ID" value="EAL70451.2"/>
    <property type="molecule type" value="Genomic_DNA"/>
</dbReference>
<dbReference type="EMBL" id="AAFI02000009">
    <property type="protein sequence ID" value="EAL70941.2"/>
    <property type="molecule type" value="Genomic_DNA"/>
</dbReference>
<dbReference type="RefSeq" id="XP_644376.2">
    <property type="nucleotide sequence ID" value="XM_639284.2"/>
</dbReference>
<dbReference type="RefSeq" id="XP_645037.2">
    <property type="nucleotide sequence ID" value="XM_639945.2"/>
</dbReference>
<dbReference type="SMR" id="A1XDC0"/>
<dbReference type="FunCoup" id="A1XDC0">
    <property type="interactions" value="703"/>
</dbReference>
<dbReference type="STRING" id="44689.A1XDC0"/>
<dbReference type="PaxDb" id="44689-DDB0233563"/>
<dbReference type="EnsemblProtists" id="EAL70451">
    <property type="protein sequence ID" value="EAL70451"/>
    <property type="gene ID" value="DDB_G0274035"/>
</dbReference>
<dbReference type="EnsemblProtists" id="EAL70941">
    <property type="protein sequence ID" value="EAL70941"/>
    <property type="gene ID" value="DDB_G0272608"/>
</dbReference>
<dbReference type="GeneID" id="8618714"/>
<dbReference type="GeneID" id="8619262"/>
<dbReference type="KEGG" id="ddi:DDB_G0272608"/>
<dbReference type="KEGG" id="ddi:DDB_G0274035"/>
<dbReference type="dictyBase" id="DDB_G0272608">
    <property type="gene designation" value="stip-1"/>
</dbReference>
<dbReference type="dictyBase" id="DDB_G0274035">
    <property type="gene designation" value="stip-2"/>
</dbReference>
<dbReference type="VEuPathDB" id="AmoebaDB:DDB_G0274035"/>
<dbReference type="eggNOG" id="KOG2184">
    <property type="taxonomic scope" value="Eukaryota"/>
</dbReference>
<dbReference type="HOGENOM" id="CLU_007977_1_0_1"/>
<dbReference type="InParanoid" id="A1XDC0"/>
<dbReference type="OMA" id="CEQDIIQ"/>
<dbReference type="PhylomeDB" id="A1XDC0"/>
<dbReference type="PRO" id="PR:A1XDC0"/>
<dbReference type="Proteomes" id="UP000002195">
    <property type="component" value="Chromosome 2"/>
</dbReference>
<dbReference type="GO" id="GO:0005737">
    <property type="term" value="C:cytoplasm"/>
    <property type="evidence" value="ECO:0007669"/>
    <property type="project" value="UniProtKB-SubCell"/>
</dbReference>
<dbReference type="GO" id="GO:0005681">
    <property type="term" value="C:spliceosomal complex"/>
    <property type="evidence" value="ECO:0000250"/>
    <property type="project" value="UniProtKB"/>
</dbReference>
<dbReference type="GO" id="GO:0071008">
    <property type="term" value="C:U2-type post-mRNA release spliceosomal complex"/>
    <property type="evidence" value="ECO:0000318"/>
    <property type="project" value="GO_Central"/>
</dbReference>
<dbReference type="GO" id="GO:0003676">
    <property type="term" value="F:nucleic acid binding"/>
    <property type="evidence" value="ECO:0007669"/>
    <property type="project" value="InterPro"/>
</dbReference>
<dbReference type="GO" id="GO:0000390">
    <property type="term" value="P:spliceosomal complex disassembly"/>
    <property type="evidence" value="ECO:0000318"/>
    <property type="project" value="GO_Central"/>
</dbReference>
<dbReference type="InterPro" id="IPR000467">
    <property type="entry name" value="G_patch_dom"/>
</dbReference>
<dbReference type="InterPro" id="IPR022783">
    <property type="entry name" value="GCFC_dom"/>
</dbReference>
<dbReference type="InterPro" id="IPR022159">
    <property type="entry name" value="STIP/TFIP11_N"/>
</dbReference>
<dbReference type="InterPro" id="IPR045211">
    <property type="entry name" value="TFP11/STIP/Ntr1"/>
</dbReference>
<dbReference type="PANTHER" id="PTHR23329:SF1">
    <property type="entry name" value="TUFTELIN-INTERACTING PROTEIN 11"/>
    <property type="match status" value="1"/>
</dbReference>
<dbReference type="PANTHER" id="PTHR23329">
    <property type="entry name" value="TUFTELIN-INTERACTING PROTEIN 11-RELATED"/>
    <property type="match status" value="1"/>
</dbReference>
<dbReference type="Pfam" id="PF01585">
    <property type="entry name" value="G-patch"/>
    <property type="match status" value="1"/>
</dbReference>
<dbReference type="Pfam" id="PF07842">
    <property type="entry name" value="GCFC"/>
    <property type="match status" value="1"/>
</dbReference>
<dbReference type="Pfam" id="PF12457">
    <property type="entry name" value="TIP_N"/>
    <property type="match status" value="1"/>
</dbReference>
<dbReference type="SMART" id="SM00443">
    <property type="entry name" value="G_patch"/>
    <property type="match status" value="1"/>
</dbReference>
<dbReference type="PROSITE" id="PS50174">
    <property type="entry name" value="G_PATCH"/>
    <property type="match status" value="1"/>
</dbReference>
<organism>
    <name type="scientific">Dictyostelium discoideum</name>
    <name type="common">Social amoeba</name>
    <dbReference type="NCBI Taxonomy" id="44689"/>
    <lineage>
        <taxon>Eukaryota</taxon>
        <taxon>Amoebozoa</taxon>
        <taxon>Evosea</taxon>
        <taxon>Eumycetozoa</taxon>
        <taxon>Dictyostelia</taxon>
        <taxon>Dictyosteliales</taxon>
        <taxon>Dictyosteliaceae</taxon>
        <taxon>Dictyostelium</taxon>
    </lineage>
</organism>
<accession>A1XDC0</accession>
<accession>Q556N6</accession>
<accession>Q86AN4</accession>
<proteinExistence type="evidence at transcript level"/>
<reference key="1">
    <citation type="journal article" date="2007" name="Exp. Cell Res.">
        <title>Characterization of STIP, a multi-domain nuclear protein, highly conserved in metazoans, and essential for embryogenesis in Caenorhabditis elegans.</title>
        <authorList>
            <person name="Ji Q."/>
            <person name="Huang C.-H."/>
            <person name="Peng J."/>
            <person name="Hashmi S."/>
            <person name="Ye T."/>
            <person name="Chen Y."/>
        </authorList>
    </citation>
    <scope>NUCLEOTIDE SEQUENCE [MRNA]</scope>
    <source>
        <strain>AX2</strain>
    </source>
</reference>
<reference key="2">
    <citation type="journal article" date="2002" name="Nature">
        <title>Sequence and analysis of chromosome 2 of Dictyostelium discoideum.</title>
        <authorList>
            <person name="Gloeckner G."/>
            <person name="Eichinger L."/>
            <person name="Szafranski K."/>
            <person name="Pachebat J.A."/>
            <person name="Bankier A.T."/>
            <person name="Dear P.H."/>
            <person name="Lehmann R."/>
            <person name="Baumgart C."/>
            <person name="Parra G."/>
            <person name="Abril J.F."/>
            <person name="Guigo R."/>
            <person name="Kumpf K."/>
            <person name="Tunggal B."/>
            <person name="Cox E.C."/>
            <person name="Quail M.A."/>
            <person name="Platzer M."/>
            <person name="Rosenthal A."/>
            <person name="Noegel A.A."/>
        </authorList>
    </citation>
    <scope>NUCLEOTIDE SEQUENCE [LARGE SCALE GENOMIC DNA]</scope>
    <source>
        <strain>AX4</strain>
    </source>
</reference>
<reference key="3">
    <citation type="journal article" date="2005" name="Nature">
        <title>The genome of the social amoeba Dictyostelium discoideum.</title>
        <authorList>
            <person name="Eichinger L."/>
            <person name="Pachebat J.A."/>
            <person name="Gloeckner G."/>
            <person name="Rajandream M.A."/>
            <person name="Sucgang R."/>
            <person name="Berriman M."/>
            <person name="Song J."/>
            <person name="Olsen R."/>
            <person name="Szafranski K."/>
            <person name="Xu Q."/>
            <person name="Tunggal B."/>
            <person name="Kummerfeld S."/>
            <person name="Madera M."/>
            <person name="Konfortov B.A."/>
            <person name="Rivero F."/>
            <person name="Bankier A.T."/>
            <person name="Lehmann R."/>
            <person name="Hamlin N."/>
            <person name="Davies R."/>
            <person name="Gaudet P."/>
            <person name="Fey P."/>
            <person name="Pilcher K."/>
            <person name="Chen G."/>
            <person name="Saunders D."/>
            <person name="Sodergren E.J."/>
            <person name="Davis P."/>
            <person name="Kerhornou A."/>
            <person name="Nie X."/>
            <person name="Hall N."/>
            <person name="Anjard C."/>
            <person name="Hemphill L."/>
            <person name="Bason N."/>
            <person name="Farbrother P."/>
            <person name="Desany B."/>
            <person name="Just E."/>
            <person name="Morio T."/>
            <person name="Rost R."/>
            <person name="Churcher C.M."/>
            <person name="Cooper J."/>
            <person name="Haydock S."/>
            <person name="van Driessche N."/>
            <person name="Cronin A."/>
            <person name="Goodhead I."/>
            <person name="Muzny D.M."/>
            <person name="Mourier T."/>
            <person name="Pain A."/>
            <person name="Lu M."/>
            <person name="Harper D."/>
            <person name="Lindsay R."/>
            <person name="Hauser H."/>
            <person name="James K.D."/>
            <person name="Quiles M."/>
            <person name="Madan Babu M."/>
            <person name="Saito T."/>
            <person name="Buchrieser C."/>
            <person name="Wardroper A."/>
            <person name="Felder M."/>
            <person name="Thangavelu M."/>
            <person name="Johnson D."/>
            <person name="Knights A."/>
            <person name="Loulseged H."/>
            <person name="Mungall K.L."/>
            <person name="Oliver K."/>
            <person name="Price C."/>
            <person name="Quail M.A."/>
            <person name="Urushihara H."/>
            <person name="Hernandez J."/>
            <person name="Rabbinowitsch E."/>
            <person name="Steffen D."/>
            <person name="Sanders M."/>
            <person name="Ma J."/>
            <person name="Kohara Y."/>
            <person name="Sharp S."/>
            <person name="Simmonds M.N."/>
            <person name="Spiegler S."/>
            <person name="Tivey A."/>
            <person name="Sugano S."/>
            <person name="White B."/>
            <person name="Walker D."/>
            <person name="Woodward J.R."/>
            <person name="Winckler T."/>
            <person name="Tanaka Y."/>
            <person name="Shaulsky G."/>
            <person name="Schleicher M."/>
            <person name="Weinstock G.M."/>
            <person name="Rosenthal A."/>
            <person name="Cox E.C."/>
            <person name="Chisholm R.L."/>
            <person name="Gibbs R.A."/>
            <person name="Loomis W.F."/>
            <person name="Platzer M."/>
            <person name="Kay R.R."/>
            <person name="Williams J.G."/>
            <person name="Dear P.H."/>
            <person name="Noegel A.A."/>
            <person name="Barrell B.G."/>
            <person name="Kuspa A."/>
        </authorList>
    </citation>
    <scope>NUCLEOTIDE SEQUENCE [LARGE SCALE GENOMIC DNA]</scope>
    <source>
        <strain>AX4</strain>
    </source>
</reference>